<dbReference type="EC" id="5.1.3.24" evidence="5"/>
<dbReference type="EMBL" id="U14003">
    <property type="protein sequence ID" value="AAA97206.1"/>
    <property type="status" value="ALT_INIT"/>
    <property type="molecule type" value="Genomic_DNA"/>
</dbReference>
<dbReference type="EMBL" id="U00096">
    <property type="protein sequence ID" value="AAC77266.2"/>
    <property type="molecule type" value="Genomic_DNA"/>
</dbReference>
<dbReference type="EMBL" id="AP009048">
    <property type="protein sequence ID" value="BAE78303.1"/>
    <property type="molecule type" value="Genomic_DNA"/>
</dbReference>
<dbReference type="PIR" id="S56535">
    <property type="entry name" value="S56535"/>
</dbReference>
<dbReference type="RefSeq" id="NP_418730.4">
    <property type="nucleotide sequence ID" value="NC_000913.3"/>
</dbReference>
<dbReference type="RefSeq" id="WP_001309184.1">
    <property type="nucleotide sequence ID" value="NZ_SSUV01000012.1"/>
</dbReference>
<dbReference type="PDB" id="2UVK">
    <property type="method" value="X-ray"/>
    <property type="resolution" value="1.50 A"/>
    <property type="chains" value="A/B=20-368"/>
</dbReference>
<dbReference type="PDBsum" id="2UVK"/>
<dbReference type="SMR" id="P39371"/>
<dbReference type="BioGRID" id="4259377">
    <property type="interactions" value="15"/>
</dbReference>
<dbReference type="DIP" id="DIP-12628N"/>
<dbReference type="FunCoup" id="P39371">
    <property type="interactions" value="106"/>
</dbReference>
<dbReference type="IntAct" id="P39371">
    <property type="interactions" value="6"/>
</dbReference>
<dbReference type="STRING" id="511145.b4310"/>
<dbReference type="jPOST" id="P39371"/>
<dbReference type="PaxDb" id="511145-b4310"/>
<dbReference type="EnsemblBacteria" id="AAC77266">
    <property type="protein sequence ID" value="AAC77266"/>
    <property type="gene ID" value="b4310"/>
</dbReference>
<dbReference type="GeneID" id="949106"/>
<dbReference type="KEGG" id="ecj:JW5777"/>
<dbReference type="KEGG" id="eco:b4310"/>
<dbReference type="KEGG" id="ecoc:C3026_23270"/>
<dbReference type="PATRIC" id="fig|1411691.4.peg.2383"/>
<dbReference type="EchoBASE" id="EB2450"/>
<dbReference type="eggNOG" id="COG3055">
    <property type="taxonomic scope" value="Bacteria"/>
</dbReference>
<dbReference type="HOGENOM" id="CLU_061535_0_0_6"/>
<dbReference type="InParanoid" id="P39371"/>
<dbReference type="OMA" id="FNGFFQD"/>
<dbReference type="OrthoDB" id="198899at2"/>
<dbReference type="PhylomeDB" id="P39371"/>
<dbReference type="BioCyc" id="EcoCyc:G7920-MONOMER"/>
<dbReference type="BioCyc" id="MetaCyc:G7920-MONOMER"/>
<dbReference type="BRENDA" id="5.1.3.24">
    <property type="organism ID" value="2026"/>
</dbReference>
<dbReference type="EvolutionaryTrace" id="P39371"/>
<dbReference type="PRO" id="PR:P39371"/>
<dbReference type="Proteomes" id="UP000000625">
    <property type="component" value="Chromosome"/>
</dbReference>
<dbReference type="GO" id="GO:0030288">
    <property type="term" value="C:outer membrane-bounded periplasmic space"/>
    <property type="evidence" value="ECO:0000314"/>
    <property type="project" value="EcoCyc"/>
</dbReference>
<dbReference type="GO" id="GO:0042803">
    <property type="term" value="F:protein homodimerization activity"/>
    <property type="evidence" value="ECO:0000314"/>
    <property type="project" value="EcoCyc"/>
</dbReference>
<dbReference type="GO" id="GO:0016857">
    <property type="term" value="F:racemase and epimerase activity, acting on carbohydrates and derivatives"/>
    <property type="evidence" value="ECO:0000314"/>
    <property type="project" value="EcoCyc"/>
</dbReference>
<dbReference type="GO" id="GO:0019262">
    <property type="term" value="P:N-acetylneuraminate catabolic process"/>
    <property type="evidence" value="ECO:0000315"/>
    <property type="project" value="EcoCyc"/>
</dbReference>
<dbReference type="FunFam" id="2.120.10.80:FF:000061">
    <property type="entry name" value="N-acetylneuraminate epimerase"/>
    <property type="match status" value="1"/>
</dbReference>
<dbReference type="FunFam" id="2.120.10.80:FF:000067">
    <property type="entry name" value="N-acetylneuraminate epimerase"/>
    <property type="match status" value="1"/>
</dbReference>
<dbReference type="Gene3D" id="2.120.10.80">
    <property type="entry name" value="Kelch-type beta propeller"/>
    <property type="match status" value="2"/>
</dbReference>
<dbReference type="HAMAP" id="MF_01195">
    <property type="entry name" value="NanM"/>
    <property type="match status" value="1"/>
</dbReference>
<dbReference type="InterPro" id="IPR015915">
    <property type="entry name" value="Kelch-typ_b-propeller"/>
</dbReference>
<dbReference type="InterPro" id="IPR056734">
    <property type="entry name" value="NANM"/>
</dbReference>
<dbReference type="InterPro" id="IPR019936">
    <property type="entry name" value="NanM_proteobact"/>
</dbReference>
<dbReference type="NCBIfam" id="TIGR03547">
    <property type="entry name" value="muta_rot_YjhT"/>
    <property type="match status" value="1"/>
</dbReference>
<dbReference type="NCBIfam" id="NF010730">
    <property type="entry name" value="PRK14131.1"/>
    <property type="match status" value="1"/>
</dbReference>
<dbReference type="PANTHER" id="PTHR45632:SF3">
    <property type="entry name" value="KELCH-LIKE PROTEIN 32"/>
    <property type="match status" value="1"/>
</dbReference>
<dbReference type="PANTHER" id="PTHR45632">
    <property type="entry name" value="LD33804P"/>
    <property type="match status" value="1"/>
</dbReference>
<dbReference type="Pfam" id="PF24996">
    <property type="entry name" value="NANM"/>
    <property type="match status" value="1"/>
</dbReference>
<dbReference type="SUPFAM" id="SSF117281">
    <property type="entry name" value="Kelch motif"/>
    <property type="match status" value="1"/>
</dbReference>
<organism>
    <name type="scientific">Escherichia coli (strain K12)</name>
    <dbReference type="NCBI Taxonomy" id="83333"/>
    <lineage>
        <taxon>Bacteria</taxon>
        <taxon>Pseudomonadati</taxon>
        <taxon>Pseudomonadota</taxon>
        <taxon>Gammaproteobacteria</taxon>
        <taxon>Enterobacterales</taxon>
        <taxon>Enterobacteriaceae</taxon>
        <taxon>Escherichia</taxon>
    </lineage>
</organism>
<protein>
    <recommendedName>
        <fullName>N-acetylneuraminate epimerase</fullName>
        <ecNumber evidence="5">5.1.3.24</ecNumber>
    </recommendedName>
    <alternativeName>
        <fullName evidence="6">N-acetylneuraminate anomerase NanM</fullName>
    </alternativeName>
    <alternativeName>
        <fullName>N-acetylneuraminate mutarotase</fullName>
        <shortName>Neu5Ac mutarotase</shortName>
    </alternativeName>
    <alternativeName>
        <fullName>Sialic acid epimerase</fullName>
    </alternativeName>
</protein>
<evidence type="ECO:0000255" key="1"/>
<evidence type="ECO:0000269" key="2">
    <source>
    </source>
</evidence>
<evidence type="ECO:0000269" key="3">
    <source>
    </source>
</evidence>
<evidence type="ECO:0000269" key="4">
    <source>
    </source>
</evidence>
<evidence type="ECO:0000269" key="5">
    <source>
    </source>
</evidence>
<evidence type="ECO:0000303" key="6">
    <source>
    </source>
</evidence>
<evidence type="ECO:0000305" key="7"/>
<evidence type="ECO:0007829" key="8">
    <source>
        <dbReference type="PDB" id="2UVK"/>
    </source>
</evidence>
<sequence>MNKTITALAIMMASFAANASVLPETPVPFKSGTGAIDNDTVYIGLGSAGTAWYKLDTQAKDKKWTALAAFPGGPRDQATSAFIDGNLYVFGGIGKNSEGLTQVFNDVHKYNPKTNSWVKLMSHAPMGMAGHVTFVHNGKAYVTGGVNQNIFNGYFEDLNEAGKDSTAIDKINAHYFDKKAEDYFFNKFLLSFDPSTQQWSYAGESPWYGTAGAAVVNKGDKTWLINGEAKPGLRTDAVFELDFTGNNLKWNKLAPVSSPDGVAGGFAGISNDSLIFAGGAGFKGSRENYQNGKNYAHEGLKKSYSTDIHLWHNGKWDKSGELSQGRAYGVSLPWNNSLLIIGGETAGGKAVTDSVLITVKDNKVTVQN</sequence>
<accession>P39371</accession>
<accession>Q2M603</accession>
<keyword id="KW-0002">3D-structure</keyword>
<keyword id="KW-0119">Carbohydrate metabolism</keyword>
<keyword id="KW-0413">Isomerase</keyword>
<keyword id="KW-0880">Kelch repeat</keyword>
<keyword id="KW-0574">Periplasm</keyword>
<keyword id="KW-1185">Reference proteome</keyword>
<keyword id="KW-0677">Repeat</keyword>
<keyword id="KW-0732">Signal</keyword>
<comment type="function">
    <text evidence="3 5">Converts alpha-N-acetylneuranimic acid (Neu5Ac) to the beta-anomer, accelerating the equilibrium between the alpha- and beta-anomers. Probably facilitates sialidase-negative bacteria to compete successfully for limited amounts of extracellular Neu5Ac, which is likely taken up in the beta-anomer. In addition, the rapid removal of sialic acid from solution might be advantageous to the bacterium to damp down host responses (PubMed:18063573). Forms linear aceneuramate during interconversion of Neu5Ac anomers (PubMed:33895133).</text>
</comment>
<comment type="catalytic activity">
    <reaction evidence="5">
        <text>N-acetyl-alpha-neuraminate = N-acetyl-beta-neuraminate</text>
        <dbReference type="Rhea" id="RHEA:25233"/>
        <dbReference type="ChEBI" id="CHEBI:58705"/>
        <dbReference type="ChEBI" id="CHEBI:58770"/>
        <dbReference type="EC" id="5.1.3.24"/>
    </reaction>
    <physiologicalReaction direction="left-to-right" evidence="5">
        <dbReference type="Rhea" id="RHEA:25234"/>
    </physiologicalReaction>
    <physiologicalReaction direction="right-to-left" evidence="5">
        <dbReference type="Rhea" id="RHEA:25235"/>
    </physiologicalReaction>
</comment>
<comment type="subunit">
    <text evidence="3">Homodimer.</text>
</comment>
<comment type="subcellular location">
    <subcellularLocation>
        <location evidence="3">Periplasm</location>
    </subcellularLocation>
</comment>
<comment type="induction">
    <text evidence="2 4">Induced by N-acetylneuraminate and modulated by N-acetylglucosamine, via the NanR and NagC regulators.</text>
</comment>
<comment type="mass spectrometry"/>
<comment type="similarity">
    <text evidence="7">Belongs to the NanM family.</text>
</comment>
<comment type="sequence caution" evidence="7">
    <conflict type="erroneous initiation">
        <sequence resource="EMBL-CDS" id="AAA97206"/>
    </conflict>
    <text>Extended N-terminus.</text>
</comment>
<feature type="signal peptide">
    <location>
        <begin position="1"/>
        <end position="19"/>
    </location>
</feature>
<feature type="chain" id="PRO_0000016655" description="N-acetylneuraminate epimerase">
    <location>
        <begin position="20"/>
        <end position="368"/>
    </location>
</feature>
<feature type="repeat" description="Kelch 1">
    <location>
        <begin position="40"/>
        <end position="84"/>
    </location>
</feature>
<feature type="repeat" description="Kelch 2">
    <location>
        <begin position="86"/>
        <end position="137"/>
    </location>
</feature>
<feature type="repeat" description="Kelch 3">
    <location>
        <begin position="139"/>
        <end position="173"/>
    </location>
</feature>
<feature type="repeat" description="Kelch 4">
    <location>
        <begin position="174"/>
        <end position="219"/>
    </location>
</feature>
<feature type="repeat" description="Kelch 5">
    <location>
        <begin position="222"/>
        <end position="265"/>
    </location>
</feature>
<feature type="repeat" description="Kelch 6">
    <location>
        <begin position="287"/>
        <end position="336"/>
    </location>
</feature>
<feature type="repeat" description="Kelch 7">
    <location>
        <begin position="338"/>
        <end position="367"/>
    </location>
</feature>
<feature type="active site" description="Proton acceptor" evidence="1">
    <location>
        <position position="228"/>
    </location>
</feature>
<feature type="mutagenesis site" description="No effect on catalytic activity." evidence="3">
    <original>K</original>
    <variation>A</variation>
    <location>
        <position position="30"/>
    </location>
</feature>
<feature type="mutagenesis site" description="Great decrease in catalytic activity." evidence="3">
    <original>E</original>
    <variation>A</variation>
    <location>
        <position position="228"/>
    </location>
</feature>
<feature type="mutagenesis site" description="Decrease in catalytic activity." evidence="3">
    <original>R</original>
    <variation>A</variation>
    <location>
        <position position="234"/>
    </location>
</feature>
<feature type="mutagenesis site" description="No effect on catalytic activity." evidence="3">
    <original>H</original>
    <variation>A</variation>
    <location>
        <position position="297"/>
    </location>
</feature>
<feature type="mutagenesis site" description="No effect on catalytic activity." evidence="3">
    <original>K</original>
    <variation>A</variation>
    <location>
        <position position="302"/>
    </location>
</feature>
<feature type="mutagenesis site" description="No effect on catalytic activity." evidence="3">
    <original>Y</original>
    <variation>A</variation>
    <location>
        <position position="328"/>
    </location>
</feature>
<feature type="mutagenesis site" description="No effect on catalytic activity." evidence="3">
    <original>E</original>
    <variation>A</variation>
    <location>
        <position position="344"/>
    </location>
</feature>
<feature type="strand" evidence="8">
    <location>
        <begin position="33"/>
        <end position="37"/>
    </location>
</feature>
<feature type="strand" evidence="8">
    <location>
        <begin position="40"/>
        <end position="44"/>
    </location>
</feature>
<feature type="helix" evidence="8">
    <location>
        <begin position="46"/>
        <end position="48"/>
    </location>
</feature>
<feature type="strand" evidence="8">
    <location>
        <begin position="52"/>
        <end position="56"/>
    </location>
</feature>
<feature type="strand" evidence="8">
    <location>
        <begin position="59"/>
        <end position="61"/>
    </location>
</feature>
<feature type="strand" evidence="8">
    <location>
        <begin position="64"/>
        <end position="66"/>
    </location>
</feature>
<feature type="strand" evidence="8">
    <location>
        <begin position="79"/>
        <end position="83"/>
    </location>
</feature>
<feature type="strand" evidence="8">
    <location>
        <begin position="86"/>
        <end position="90"/>
    </location>
</feature>
<feature type="strand" evidence="8">
    <location>
        <begin position="93"/>
        <end position="95"/>
    </location>
</feature>
<feature type="strand" evidence="8">
    <location>
        <begin position="101"/>
        <end position="103"/>
    </location>
</feature>
<feature type="strand" evidence="8">
    <location>
        <begin position="107"/>
        <end position="111"/>
    </location>
</feature>
<feature type="turn" evidence="8">
    <location>
        <begin position="112"/>
        <end position="115"/>
    </location>
</feature>
<feature type="strand" evidence="8">
    <location>
        <begin position="116"/>
        <end position="119"/>
    </location>
</feature>
<feature type="strand" evidence="8">
    <location>
        <begin position="132"/>
        <end position="136"/>
    </location>
</feature>
<feature type="strand" evidence="8">
    <location>
        <begin position="139"/>
        <end position="143"/>
    </location>
</feature>
<feature type="helix" evidence="8">
    <location>
        <begin position="148"/>
        <end position="161"/>
    </location>
</feature>
<feature type="helix" evidence="8">
    <location>
        <begin position="165"/>
        <end position="176"/>
    </location>
</feature>
<feature type="helix" evidence="8">
    <location>
        <begin position="180"/>
        <end position="183"/>
    </location>
</feature>
<feature type="strand" evidence="8">
    <location>
        <begin position="188"/>
        <end position="192"/>
    </location>
</feature>
<feature type="turn" evidence="8">
    <location>
        <begin position="194"/>
        <end position="196"/>
    </location>
</feature>
<feature type="strand" evidence="8">
    <location>
        <begin position="199"/>
        <end position="204"/>
    </location>
</feature>
<feature type="strand" evidence="8">
    <location>
        <begin position="214"/>
        <end position="218"/>
    </location>
</feature>
<feature type="strand" evidence="8">
    <location>
        <begin position="221"/>
        <end position="225"/>
    </location>
</feature>
<feature type="strand" evidence="8">
    <location>
        <begin position="228"/>
        <end position="230"/>
    </location>
</feature>
<feature type="strand" evidence="8">
    <location>
        <begin position="238"/>
        <end position="242"/>
    </location>
</feature>
<feature type="strand" evidence="8">
    <location>
        <begin position="245"/>
        <end position="247"/>
    </location>
</feature>
<feature type="strand" evidence="8">
    <location>
        <begin position="249"/>
        <end position="252"/>
    </location>
</feature>
<feature type="turn" evidence="8">
    <location>
        <begin position="258"/>
        <end position="260"/>
    </location>
</feature>
<feature type="strand" evidence="8">
    <location>
        <begin position="266"/>
        <end position="270"/>
    </location>
</feature>
<feature type="strand" evidence="8">
    <location>
        <begin position="273"/>
        <end position="277"/>
    </location>
</feature>
<feature type="helix" evidence="8">
    <location>
        <begin position="285"/>
        <end position="290"/>
    </location>
</feature>
<feature type="turn" evidence="8">
    <location>
        <begin position="296"/>
        <end position="299"/>
    </location>
</feature>
<feature type="strand" evidence="8">
    <location>
        <begin position="307"/>
        <end position="310"/>
    </location>
</feature>
<feature type="strand" evidence="8">
    <location>
        <begin position="317"/>
        <end position="321"/>
    </location>
</feature>
<feature type="strand" evidence="8">
    <location>
        <begin position="327"/>
        <end position="334"/>
    </location>
</feature>
<feature type="strand" evidence="8">
    <location>
        <begin position="337"/>
        <end position="344"/>
    </location>
</feature>
<feature type="helix" evidence="8">
    <location>
        <begin position="346"/>
        <end position="348"/>
    </location>
</feature>
<feature type="strand" evidence="8">
    <location>
        <begin position="350"/>
        <end position="358"/>
    </location>
</feature>
<feature type="strand" evidence="8">
    <location>
        <begin position="365"/>
        <end position="367"/>
    </location>
</feature>
<proteinExistence type="evidence at protein level"/>
<gene>
    <name type="primary">nanM</name>
    <name type="synonym">yjhT</name>
    <name type="ordered locus">b4310</name>
    <name type="ordered locus">JW5777</name>
</gene>
<reference key="1">
    <citation type="journal article" date="1995" name="Nucleic Acids Res.">
        <title>Analysis of the Escherichia coli genome VI: DNA sequence of the region from 92.8 through 100 minutes.</title>
        <authorList>
            <person name="Burland V.D."/>
            <person name="Plunkett G. III"/>
            <person name="Sofia H.J."/>
            <person name="Daniels D.L."/>
            <person name="Blattner F.R."/>
        </authorList>
    </citation>
    <scope>NUCLEOTIDE SEQUENCE [LARGE SCALE GENOMIC DNA]</scope>
    <source>
        <strain>K12 / MG1655 / ATCC 47076</strain>
    </source>
</reference>
<reference key="2">
    <citation type="journal article" date="1997" name="Science">
        <title>The complete genome sequence of Escherichia coli K-12.</title>
        <authorList>
            <person name="Blattner F.R."/>
            <person name="Plunkett G. III"/>
            <person name="Bloch C.A."/>
            <person name="Perna N.T."/>
            <person name="Burland V."/>
            <person name="Riley M."/>
            <person name="Collado-Vides J."/>
            <person name="Glasner J.D."/>
            <person name="Rode C.K."/>
            <person name="Mayhew G.F."/>
            <person name="Gregor J."/>
            <person name="Davis N.W."/>
            <person name="Kirkpatrick H.A."/>
            <person name="Goeden M.A."/>
            <person name="Rose D.J."/>
            <person name="Mau B."/>
            <person name="Shao Y."/>
        </authorList>
    </citation>
    <scope>NUCLEOTIDE SEQUENCE [LARGE SCALE GENOMIC DNA]</scope>
    <source>
        <strain>K12 / MG1655 / ATCC 47076</strain>
    </source>
</reference>
<reference key="3">
    <citation type="journal article" date="2006" name="Mol. Syst. Biol.">
        <title>Highly accurate genome sequences of Escherichia coli K-12 strains MG1655 and W3110.</title>
        <authorList>
            <person name="Hayashi K."/>
            <person name="Morooka N."/>
            <person name="Yamamoto Y."/>
            <person name="Fujita K."/>
            <person name="Isono K."/>
            <person name="Choi S."/>
            <person name="Ohtsubo E."/>
            <person name="Baba T."/>
            <person name="Wanner B.L."/>
            <person name="Mori H."/>
            <person name="Horiuchi T."/>
        </authorList>
    </citation>
    <scope>NUCLEOTIDE SEQUENCE [LARGE SCALE GENOMIC DNA]</scope>
    <source>
        <strain>K12 / W3110 / ATCC 27325 / DSM 5911</strain>
    </source>
</reference>
<reference key="4">
    <citation type="journal article" date="2005" name="J. Bacteriol.">
        <title>Function and expression of an N-acetylneuraminic acid-inducible outer membrane channel in Escherichia coli.</title>
        <authorList>
            <person name="Condemine G."/>
            <person name="Berrier C."/>
            <person name="Plumbridge J."/>
            <person name="Ghazi A."/>
        </authorList>
    </citation>
    <scope>INDUCTION BY SIALIC ACID</scope>
</reference>
<reference key="5">
    <citation type="journal article" date="2013" name="J. Bacteriol.">
        <title>Control of the Escherichia coli sialoregulon by transcriptional repressor NanR.</title>
        <authorList>
            <person name="Kalivoda K.A."/>
            <person name="Steenbergen S.M."/>
            <person name="Vimr E.R."/>
        </authorList>
    </citation>
    <scope>INDUCTION</scope>
</reference>
<reference key="6">
    <citation type="journal article" date="2021" name="J. Biol. Chem.">
        <title>The metalloprotein YhcH is an anomerase providing N-acetylneuraminate aldolase with the open form of its substrate.</title>
        <authorList>
            <person name="Kentache T."/>
            <person name="Thabault L."/>
            <person name="Deumer G."/>
            <person name="Haufroid V."/>
            <person name="Frederick R."/>
            <person name="Linster C.L."/>
            <person name="Peracchi A."/>
            <person name="Veiga-da-Cunha M."/>
            <person name="Bommer G.T."/>
            <person name="Van Schaftingen E."/>
        </authorList>
    </citation>
    <scope>FUNCTION</scope>
    <scope>CATALYTIC ACTIVITY</scope>
    <scope>REACTION MECHANISM</scope>
    <source>
        <strain>K12</strain>
    </source>
</reference>
<reference key="7">
    <citation type="journal article" date="2008" name="J. Biol. Chem.">
        <title>Sialic acid mutarotation is catalyzed by the Escherichia coli beta-propeller protein YjhT.</title>
        <authorList>
            <person name="Severi E."/>
            <person name="Mueller A."/>
            <person name="Potts J.R."/>
            <person name="Leech A."/>
            <person name="Williamson D."/>
            <person name="Wilson K.S."/>
            <person name="Thomas G.H."/>
        </authorList>
    </citation>
    <scope>X-RAY CRYSTALLOGRAPHY (1.5 ANGSTROMS)</scope>
    <scope>NMR</scope>
    <scope>MASS SPECTROMETRY</scope>
    <scope>FUNCTION</scope>
    <scope>SUBCELLULAR LOCATION</scope>
    <scope>SUBUNIT</scope>
    <scope>MUTAGENESIS OF LYS-30; GLU-228; ARG-234; HIS-297; LYS-302; TYR-328 AND GLU-344</scope>
    <source>
        <strain>K12 / MG1655 / ATCC 47076</strain>
    </source>
</reference>
<name>NANM_ECOLI</name>